<reference key="1">
    <citation type="journal article" date="2005" name="Nature">
        <title>The genome of the social amoeba Dictyostelium discoideum.</title>
        <authorList>
            <person name="Eichinger L."/>
            <person name="Pachebat J.A."/>
            <person name="Gloeckner G."/>
            <person name="Rajandream M.A."/>
            <person name="Sucgang R."/>
            <person name="Berriman M."/>
            <person name="Song J."/>
            <person name="Olsen R."/>
            <person name="Szafranski K."/>
            <person name="Xu Q."/>
            <person name="Tunggal B."/>
            <person name="Kummerfeld S."/>
            <person name="Madera M."/>
            <person name="Konfortov B.A."/>
            <person name="Rivero F."/>
            <person name="Bankier A.T."/>
            <person name="Lehmann R."/>
            <person name="Hamlin N."/>
            <person name="Davies R."/>
            <person name="Gaudet P."/>
            <person name="Fey P."/>
            <person name="Pilcher K."/>
            <person name="Chen G."/>
            <person name="Saunders D."/>
            <person name="Sodergren E.J."/>
            <person name="Davis P."/>
            <person name="Kerhornou A."/>
            <person name="Nie X."/>
            <person name="Hall N."/>
            <person name="Anjard C."/>
            <person name="Hemphill L."/>
            <person name="Bason N."/>
            <person name="Farbrother P."/>
            <person name="Desany B."/>
            <person name="Just E."/>
            <person name="Morio T."/>
            <person name="Rost R."/>
            <person name="Churcher C.M."/>
            <person name="Cooper J."/>
            <person name="Haydock S."/>
            <person name="van Driessche N."/>
            <person name="Cronin A."/>
            <person name="Goodhead I."/>
            <person name="Muzny D.M."/>
            <person name="Mourier T."/>
            <person name="Pain A."/>
            <person name="Lu M."/>
            <person name="Harper D."/>
            <person name="Lindsay R."/>
            <person name="Hauser H."/>
            <person name="James K.D."/>
            <person name="Quiles M."/>
            <person name="Madan Babu M."/>
            <person name="Saito T."/>
            <person name="Buchrieser C."/>
            <person name="Wardroper A."/>
            <person name="Felder M."/>
            <person name="Thangavelu M."/>
            <person name="Johnson D."/>
            <person name="Knights A."/>
            <person name="Loulseged H."/>
            <person name="Mungall K.L."/>
            <person name="Oliver K."/>
            <person name="Price C."/>
            <person name="Quail M.A."/>
            <person name="Urushihara H."/>
            <person name="Hernandez J."/>
            <person name="Rabbinowitsch E."/>
            <person name="Steffen D."/>
            <person name="Sanders M."/>
            <person name="Ma J."/>
            <person name="Kohara Y."/>
            <person name="Sharp S."/>
            <person name="Simmonds M.N."/>
            <person name="Spiegler S."/>
            <person name="Tivey A."/>
            <person name="Sugano S."/>
            <person name="White B."/>
            <person name="Walker D."/>
            <person name="Woodward J.R."/>
            <person name="Winckler T."/>
            <person name="Tanaka Y."/>
            <person name="Shaulsky G."/>
            <person name="Schleicher M."/>
            <person name="Weinstock G.M."/>
            <person name="Rosenthal A."/>
            <person name="Cox E.C."/>
            <person name="Chisholm R.L."/>
            <person name="Gibbs R.A."/>
            <person name="Loomis W.F."/>
            <person name="Platzer M."/>
            <person name="Kay R.R."/>
            <person name="Williams J.G."/>
            <person name="Dear P.H."/>
            <person name="Noegel A.A."/>
            <person name="Barrell B.G."/>
            <person name="Kuspa A."/>
        </authorList>
    </citation>
    <scope>NUCLEOTIDE SEQUENCE [LARGE SCALE GENOMIC DNA]</scope>
    <source>
        <strain>AX4</strain>
    </source>
</reference>
<protein>
    <recommendedName>
        <fullName>Putative uncharacterized protein DDB_G0287355</fullName>
    </recommendedName>
</protein>
<accession>Q54KG6</accession>
<organism>
    <name type="scientific">Dictyostelium discoideum</name>
    <name type="common">Social amoeba</name>
    <dbReference type="NCBI Taxonomy" id="44689"/>
    <lineage>
        <taxon>Eukaryota</taxon>
        <taxon>Amoebozoa</taxon>
        <taxon>Evosea</taxon>
        <taxon>Eumycetozoa</taxon>
        <taxon>Dictyostelia</taxon>
        <taxon>Dictyosteliales</taxon>
        <taxon>Dictyosteliaceae</taxon>
        <taxon>Dictyostelium</taxon>
    </lineage>
</organism>
<dbReference type="EMBL" id="AAFI02000100">
    <property type="protein sequence ID" value="EAL63745.1"/>
    <property type="molecule type" value="Genomic_DNA"/>
</dbReference>
<dbReference type="RefSeq" id="XP_637257.1">
    <property type="nucleotide sequence ID" value="XM_632165.1"/>
</dbReference>
<dbReference type="PaxDb" id="44689-DDB0187439"/>
<dbReference type="EnsemblProtists" id="EAL63745">
    <property type="protein sequence ID" value="EAL63745"/>
    <property type="gene ID" value="DDB_G0287355"/>
</dbReference>
<dbReference type="GeneID" id="8626087"/>
<dbReference type="KEGG" id="ddi:DDB_G0287355"/>
<dbReference type="dictyBase" id="DDB_G0287355"/>
<dbReference type="VEuPathDB" id="AmoebaDB:DDB_G0287355"/>
<dbReference type="HOGENOM" id="CLU_3280648_0_0_1"/>
<dbReference type="InParanoid" id="Q54KG6"/>
<dbReference type="Proteomes" id="UP000002195">
    <property type="component" value="Chromosome 5"/>
</dbReference>
<sequence>MPFVNQEIVLQIEFEKPTSQSYQVGNFCQGRLNHQETEGGT</sequence>
<comment type="caution">
    <text evidence="1">Product of a dubious gene prediction.</text>
</comment>
<proteinExistence type="uncertain"/>
<evidence type="ECO:0000305" key="1"/>
<gene>
    <name type="ORF">DDB_G0287355</name>
</gene>
<name>Y7439_DICDI</name>
<feature type="chain" id="PRO_0000347028" description="Putative uncharacterized protein DDB_G0287355">
    <location>
        <begin position="1"/>
        <end position="41"/>
    </location>
</feature>
<keyword id="KW-1185">Reference proteome</keyword>